<reference key="1">
    <citation type="journal article" date="2007" name="PLoS Genet.">
        <title>Being pathogenic, plastic, and sexual while living with a nearly minimal bacterial genome.</title>
        <authorList>
            <person name="Sirand-Pugnet P."/>
            <person name="Lartigue C."/>
            <person name="Marenda M."/>
            <person name="Jacob D."/>
            <person name="Barre A."/>
            <person name="Barbe V."/>
            <person name="Schenowitz C."/>
            <person name="Mangenot S."/>
            <person name="Couloux A."/>
            <person name="Segurens B."/>
            <person name="de Daruvar A."/>
            <person name="Blanchard A."/>
            <person name="Citti C."/>
        </authorList>
    </citation>
    <scope>NUCLEOTIDE SEQUENCE [LARGE SCALE GENOMIC DNA]</scope>
    <source>
        <strain>NCTC 10123 / CIP 59.7 / PG2</strain>
    </source>
</reference>
<keyword id="KW-0489">Methyltransferase</keyword>
<keyword id="KW-1185">Reference proteome</keyword>
<keyword id="KW-0949">S-adenosyl-L-methionine</keyword>
<keyword id="KW-0808">Transferase</keyword>
<keyword id="KW-0819">tRNA processing</keyword>
<comment type="function">
    <text evidence="2">Catalyzes the formation of N(7)-methylguanine at position 46 (m7G46) in tRNA.</text>
</comment>
<comment type="catalytic activity">
    <reaction evidence="2">
        <text>guanosine(46) in tRNA + S-adenosyl-L-methionine = N(7)-methylguanosine(46) in tRNA + S-adenosyl-L-homocysteine</text>
        <dbReference type="Rhea" id="RHEA:42708"/>
        <dbReference type="Rhea" id="RHEA-COMP:10188"/>
        <dbReference type="Rhea" id="RHEA-COMP:10189"/>
        <dbReference type="ChEBI" id="CHEBI:57856"/>
        <dbReference type="ChEBI" id="CHEBI:59789"/>
        <dbReference type="ChEBI" id="CHEBI:74269"/>
        <dbReference type="ChEBI" id="CHEBI:74480"/>
        <dbReference type="EC" id="2.1.1.33"/>
    </reaction>
</comment>
<comment type="pathway">
    <text evidence="2">tRNA modification; N(7)-methylguanine-tRNA biosynthesis.</text>
</comment>
<comment type="similarity">
    <text evidence="2">Belongs to the class I-like SAM-binding methyltransferase superfamily. TrmB family.</text>
</comment>
<organism>
    <name type="scientific">Mycoplasmopsis agalactiae (strain NCTC 10123 / CIP 59.7 / PG2)</name>
    <name type="common">Mycoplasma agalactiae</name>
    <dbReference type="NCBI Taxonomy" id="347257"/>
    <lineage>
        <taxon>Bacteria</taxon>
        <taxon>Bacillati</taxon>
        <taxon>Mycoplasmatota</taxon>
        <taxon>Mycoplasmoidales</taxon>
        <taxon>Metamycoplasmataceae</taxon>
        <taxon>Mycoplasmopsis</taxon>
    </lineage>
</organism>
<accession>A5IZB9</accession>
<gene>
    <name evidence="2" type="primary">trmB</name>
    <name type="ordered locus">MAG6780</name>
</gene>
<evidence type="ECO:0000250" key="1"/>
<evidence type="ECO:0000255" key="2">
    <source>
        <dbReference type="HAMAP-Rule" id="MF_01057"/>
    </source>
</evidence>
<dbReference type="EC" id="2.1.1.33" evidence="2"/>
<dbReference type="EMBL" id="CU179680">
    <property type="protein sequence ID" value="CAL59378.1"/>
    <property type="molecule type" value="Genomic_DNA"/>
</dbReference>
<dbReference type="RefSeq" id="WP_011949831.1">
    <property type="nucleotide sequence ID" value="NC_009497.1"/>
</dbReference>
<dbReference type="SMR" id="A5IZB9"/>
<dbReference type="STRING" id="347257.MAG6780"/>
<dbReference type="GeneID" id="93358404"/>
<dbReference type="KEGG" id="maa:MAG6780"/>
<dbReference type="HOGENOM" id="CLU_050910_2_1_14"/>
<dbReference type="UniPathway" id="UPA00989"/>
<dbReference type="Proteomes" id="UP000007065">
    <property type="component" value="Chromosome"/>
</dbReference>
<dbReference type="GO" id="GO:0043527">
    <property type="term" value="C:tRNA methyltransferase complex"/>
    <property type="evidence" value="ECO:0007669"/>
    <property type="project" value="TreeGrafter"/>
</dbReference>
<dbReference type="GO" id="GO:0008176">
    <property type="term" value="F:tRNA (guanine(46)-N7)-methyltransferase activity"/>
    <property type="evidence" value="ECO:0007669"/>
    <property type="project" value="UniProtKB-UniRule"/>
</dbReference>
<dbReference type="CDD" id="cd02440">
    <property type="entry name" value="AdoMet_MTases"/>
    <property type="match status" value="1"/>
</dbReference>
<dbReference type="Gene3D" id="3.40.50.150">
    <property type="entry name" value="Vaccinia Virus protein VP39"/>
    <property type="match status" value="1"/>
</dbReference>
<dbReference type="HAMAP" id="MF_01057">
    <property type="entry name" value="tRNA_methyltr_TrmB"/>
    <property type="match status" value="1"/>
</dbReference>
<dbReference type="InterPro" id="IPR029063">
    <property type="entry name" value="SAM-dependent_MTases_sf"/>
</dbReference>
<dbReference type="InterPro" id="IPR003358">
    <property type="entry name" value="tRNA_(Gua-N-7)_MeTrfase_Trmb"/>
</dbReference>
<dbReference type="InterPro" id="IPR055361">
    <property type="entry name" value="tRNA_methyltr_TrmB_bact"/>
</dbReference>
<dbReference type="NCBIfam" id="NF001080">
    <property type="entry name" value="PRK00121.2-2"/>
    <property type="match status" value="1"/>
</dbReference>
<dbReference type="NCBIfam" id="TIGR00091">
    <property type="entry name" value="tRNA (guanosine(46)-N7)-methyltransferase TrmB"/>
    <property type="match status" value="1"/>
</dbReference>
<dbReference type="PANTHER" id="PTHR23417">
    <property type="entry name" value="3-DEOXY-D-MANNO-OCTULOSONIC-ACID TRANSFERASE/TRNA GUANINE-N 7 - -METHYLTRANSFERASE"/>
    <property type="match status" value="1"/>
</dbReference>
<dbReference type="PANTHER" id="PTHR23417:SF14">
    <property type="entry name" value="PENTACOTRIPEPTIDE-REPEAT REGION OF PRORP DOMAIN-CONTAINING PROTEIN"/>
    <property type="match status" value="1"/>
</dbReference>
<dbReference type="Pfam" id="PF02390">
    <property type="entry name" value="Methyltransf_4"/>
    <property type="match status" value="1"/>
</dbReference>
<dbReference type="SUPFAM" id="SSF53335">
    <property type="entry name" value="S-adenosyl-L-methionine-dependent methyltransferases"/>
    <property type="match status" value="1"/>
</dbReference>
<dbReference type="PROSITE" id="PS51625">
    <property type="entry name" value="SAM_MT_TRMB"/>
    <property type="match status" value="1"/>
</dbReference>
<name>TRMB_MYCAP</name>
<sequence length="205" mass="24047">MRLRYDKNAEGKLEMFNYLIKQGDSKILLDDKTVLEIGMGKGEMIVELAKAHPELNFIGLEKYPTVAAKCIKKANEYNLSNFKILIDDAFKVDEIFEGQCKVIWLTFSDPWPKARHEKRRLTHPLFLEKYRKILDKDGILKFKSDNDGLYEFSLSSLQNSNWRIIDHGIDLHNSKYNENNYQTGYERKWSARGKKINYIFAQKGE</sequence>
<feature type="chain" id="PRO_1000136356" description="tRNA (guanine-N(7)-)-methyltransferase">
    <location>
        <begin position="1"/>
        <end position="205"/>
    </location>
</feature>
<feature type="region of interest" description="Interaction with RNA" evidence="2">
    <location>
        <begin position="115"/>
        <end position="120"/>
    </location>
</feature>
<feature type="active site" evidence="1">
    <location>
        <position position="109"/>
    </location>
</feature>
<feature type="binding site" evidence="2">
    <location>
        <position position="36"/>
    </location>
    <ligand>
        <name>S-adenosyl-L-methionine</name>
        <dbReference type="ChEBI" id="CHEBI:59789"/>
    </ligand>
</feature>
<feature type="binding site" evidence="2">
    <location>
        <position position="61"/>
    </location>
    <ligand>
        <name>S-adenosyl-L-methionine</name>
        <dbReference type="ChEBI" id="CHEBI:59789"/>
    </ligand>
</feature>
<feature type="binding site" evidence="2">
    <location>
        <position position="88"/>
    </location>
    <ligand>
        <name>S-adenosyl-L-methionine</name>
        <dbReference type="ChEBI" id="CHEBI:59789"/>
    </ligand>
</feature>
<feature type="binding site" evidence="2">
    <location>
        <position position="109"/>
    </location>
    <ligand>
        <name>S-adenosyl-L-methionine</name>
        <dbReference type="ChEBI" id="CHEBI:59789"/>
    </ligand>
</feature>
<feature type="binding site" evidence="2">
    <location>
        <position position="113"/>
    </location>
    <ligand>
        <name>substrate</name>
    </ligand>
</feature>
<feature type="binding site" evidence="2">
    <location>
        <position position="145"/>
    </location>
    <ligand>
        <name>substrate</name>
    </ligand>
</feature>
<feature type="binding site" evidence="2">
    <location>
        <begin position="183"/>
        <end position="186"/>
    </location>
    <ligand>
        <name>substrate</name>
    </ligand>
</feature>
<protein>
    <recommendedName>
        <fullName evidence="2">tRNA (guanine-N(7)-)-methyltransferase</fullName>
        <ecNumber evidence="2">2.1.1.33</ecNumber>
    </recommendedName>
    <alternativeName>
        <fullName evidence="2">tRNA (guanine(46)-N(7))-methyltransferase</fullName>
    </alternativeName>
    <alternativeName>
        <fullName evidence="2">tRNA(m7G46)-methyltransferase</fullName>
    </alternativeName>
</protein>
<proteinExistence type="inferred from homology"/>